<reference key="1">
    <citation type="submission" date="1995-03" db="UniProtKB">
        <authorList>
            <person name="Pahl A."/>
            <person name="Keller U."/>
        </authorList>
    </citation>
    <scope>PROTEIN SEQUENCE</scope>
</reference>
<keyword id="KW-0903">Direct protein sequencing</keyword>
<accession>P80438</accession>
<organism>
    <name type="scientific">Mycolicibacterium smegmatis</name>
    <name type="common">Mycobacterium smegmatis</name>
    <dbReference type="NCBI Taxonomy" id="1772"/>
    <lineage>
        <taxon>Bacteria</taxon>
        <taxon>Bacillati</taxon>
        <taxon>Actinomycetota</taxon>
        <taxon>Actinomycetes</taxon>
        <taxon>Mycobacteriales</taxon>
        <taxon>Mycobacteriaceae</taxon>
        <taxon>Mycolicibacterium</taxon>
    </lineage>
</organism>
<sequence length="24" mass="2766">MFHVLTLTYLCPLDVVXQTRPAHV</sequence>
<protein>
    <recommendedName>
        <fullName>12 kDa protein</fullName>
    </recommendedName>
</protein>
<name>12KD_MYCSM</name>
<proteinExistence type="evidence at protein level"/>
<feature type="chain" id="PRO_0000064349" description="12 kDa protein">
    <location>
        <begin position="1"/>
        <end position="24" status="greater than"/>
    </location>
</feature>
<feature type="non-terminal residue">
    <location>
        <position position="24"/>
    </location>
</feature>